<comment type="function">
    <text evidence="1">Binds 16S rRNA, required for the assembly of 30S particles and may also be responsible for determining the conformation of the 16S rRNA at the A site.</text>
</comment>
<comment type="cofactor">
    <cofactor evidence="1">
        <name>Zn(2+)</name>
        <dbReference type="ChEBI" id="CHEBI:29105"/>
    </cofactor>
    <text evidence="1">Binds 1 zinc ion per subunit.</text>
</comment>
<comment type="subunit">
    <text evidence="1">Part of the 30S ribosomal subunit. Contacts proteins S3 and S10.</text>
</comment>
<comment type="similarity">
    <text evidence="1">Belongs to the universal ribosomal protein uS14 family. Zinc-binding uS14 subfamily.</text>
</comment>
<reference key="1">
    <citation type="submission" date="2005-03" db="EMBL/GenBank/DDBJ databases">
        <title>Comparison of the complete genome sequences of Rhodococcus erythropolis PR4 and Rhodococcus opacus B4.</title>
        <authorList>
            <person name="Takarada H."/>
            <person name="Sekine M."/>
            <person name="Hosoyama A."/>
            <person name="Yamada R."/>
            <person name="Fujisawa T."/>
            <person name="Omata S."/>
            <person name="Shimizu A."/>
            <person name="Tsukatani N."/>
            <person name="Tanikawa S."/>
            <person name="Fujita N."/>
            <person name="Harayama S."/>
        </authorList>
    </citation>
    <scope>NUCLEOTIDE SEQUENCE [LARGE SCALE GENOMIC DNA]</scope>
    <source>
        <strain>PR4 / NBRC 100887</strain>
    </source>
</reference>
<dbReference type="EMBL" id="AP008957">
    <property type="protein sequence ID" value="BAH32573.1"/>
    <property type="molecule type" value="Genomic_DNA"/>
</dbReference>
<dbReference type="RefSeq" id="WP_003940698.1">
    <property type="nucleotide sequence ID" value="NC_012490.1"/>
</dbReference>
<dbReference type="SMR" id="C0ZW38"/>
<dbReference type="KEGG" id="rer:RER_18650"/>
<dbReference type="eggNOG" id="COG0199">
    <property type="taxonomic scope" value="Bacteria"/>
</dbReference>
<dbReference type="HOGENOM" id="CLU_139869_3_0_11"/>
<dbReference type="Proteomes" id="UP000002204">
    <property type="component" value="Chromosome"/>
</dbReference>
<dbReference type="GO" id="GO:0005737">
    <property type="term" value="C:cytoplasm"/>
    <property type="evidence" value="ECO:0007669"/>
    <property type="project" value="UniProtKB-ARBA"/>
</dbReference>
<dbReference type="GO" id="GO:0015935">
    <property type="term" value="C:small ribosomal subunit"/>
    <property type="evidence" value="ECO:0007669"/>
    <property type="project" value="TreeGrafter"/>
</dbReference>
<dbReference type="GO" id="GO:0019843">
    <property type="term" value="F:rRNA binding"/>
    <property type="evidence" value="ECO:0007669"/>
    <property type="project" value="UniProtKB-UniRule"/>
</dbReference>
<dbReference type="GO" id="GO:0003735">
    <property type="term" value="F:structural constituent of ribosome"/>
    <property type="evidence" value="ECO:0007669"/>
    <property type="project" value="InterPro"/>
</dbReference>
<dbReference type="GO" id="GO:0008270">
    <property type="term" value="F:zinc ion binding"/>
    <property type="evidence" value="ECO:0007669"/>
    <property type="project" value="UniProtKB-UniRule"/>
</dbReference>
<dbReference type="GO" id="GO:0006412">
    <property type="term" value="P:translation"/>
    <property type="evidence" value="ECO:0007669"/>
    <property type="project" value="UniProtKB-UniRule"/>
</dbReference>
<dbReference type="FunFam" id="4.10.830.10:FF:000001">
    <property type="entry name" value="30S ribosomal protein S14 type Z"/>
    <property type="match status" value="1"/>
</dbReference>
<dbReference type="Gene3D" id="4.10.830.10">
    <property type="entry name" value="30s Ribosomal Protein S14, Chain N"/>
    <property type="match status" value="1"/>
</dbReference>
<dbReference type="HAMAP" id="MF_01364_B">
    <property type="entry name" value="Ribosomal_uS14_2_B"/>
    <property type="match status" value="1"/>
</dbReference>
<dbReference type="InterPro" id="IPR001209">
    <property type="entry name" value="Ribosomal_uS14"/>
</dbReference>
<dbReference type="InterPro" id="IPR023053">
    <property type="entry name" value="Ribosomal_uS14_bact"/>
</dbReference>
<dbReference type="InterPro" id="IPR018271">
    <property type="entry name" value="Ribosomal_uS14_CS"/>
</dbReference>
<dbReference type="InterPro" id="IPR043140">
    <property type="entry name" value="Ribosomal_uS14_sf"/>
</dbReference>
<dbReference type="NCBIfam" id="NF005974">
    <property type="entry name" value="PRK08061.1"/>
    <property type="match status" value="1"/>
</dbReference>
<dbReference type="PANTHER" id="PTHR19836">
    <property type="entry name" value="30S RIBOSOMAL PROTEIN S14"/>
    <property type="match status" value="1"/>
</dbReference>
<dbReference type="PANTHER" id="PTHR19836:SF19">
    <property type="entry name" value="SMALL RIBOSOMAL SUBUNIT PROTEIN US14M"/>
    <property type="match status" value="1"/>
</dbReference>
<dbReference type="Pfam" id="PF00253">
    <property type="entry name" value="Ribosomal_S14"/>
    <property type="match status" value="1"/>
</dbReference>
<dbReference type="SUPFAM" id="SSF57716">
    <property type="entry name" value="Glucocorticoid receptor-like (DNA-binding domain)"/>
    <property type="match status" value="1"/>
</dbReference>
<dbReference type="PROSITE" id="PS00527">
    <property type="entry name" value="RIBOSOMAL_S14"/>
    <property type="match status" value="1"/>
</dbReference>
<organism>
    <name type="scientific">Rhodococcus erythropolis (strain PR4 / NBRC 100887)</name>
    <dbReference type="NCBI Taxonomy" id="234621"/>
    <lineage>
        <taxon>Bacteria</taxon>
        <taxon>Bacillati</taxon>
        <taxon>Actinomycetota</taxon>
        <taxon>Actinomycetes</taxon>
        <taxon>Mycobacteriales</taxon>
        <taxon>Nocardiaceae</taxon>
        <taxon>Rhodococcus</taxon>
        <taxon>Rhodococcus erythropolis group</taxon>
    </lineage>
</organism>
<proteinExistence type="inferred from homology"/>
<protein>
    <recommendedName>
        <fullName evidence="1">Small ribosomal subunit protein uS14</fullName>
    </recommendedName>
    <alternativeName>
        <fullName evidence="2">30S ribosomal protein S14 type Z</fullName>
    </alternativeName>
</protein>
<gene>
    <name evidence="1" type="primary">rpsZ</name>
    <name evidence="1" type="synonym">rpsN</name>
    <name type="ordered locus">RER_18650</name>
</gene>
<keyword id="KW-0479">Metal-binding</keyword>
<keyword id="KW-0687">Ribonucleoprotein</keyword>
<keyword id="KW-0689">Ribosomal protein</keyword>
<keyword id="KW-0694">RNA-binding</keyword>
<keyword id="KW-0699">rRNA-binding</keyword>
<keyword id="KW-0862">Zinc</keyword>
<accession>C0ZW38</accession>
<name>RS14Z_RHOE4</name>
<sequence length="61" mass="6975">MAKKALVNKANKKPKFAVRAYTRCQRCGRPHSVFRKFGLCRICVREMAHAGELPGVRKSSW</sequence>
<evidence type="ECO:0000255" key="1">
    <source>
        <dbReference type="HAMAP-Rule" id="MF_01364"/>
    </source>
</evidence>
<evidence type="ECO:0000305" key="2"/>
<feature type="chain" id="PRO_1000214916" description="Small ribosomal subunit protein uS14">
    <location>
        <begin position="1"/>
        <end position="61"/>
    </location>
</feature>
<feature type="binding site" evidence="1">
    <location>
        <position position="24"/>
    </location>
    <ligand>
        <name>Zn(2+)</name>
        <dbReference type="ChEBI" id="CHEBI:29105"/>
    </ligand>
</feature>
<feature type="binding site" evidence="1">
    <location>
        <position position="27"/>
    </location>
    <ligand>
        <name>Zn(2+)</name>
        <dbReference type="ChEBI" id="CHEBI:29105"/>
    </ligand>
</feature>
<feature type="binding site" evidence="1">
    <location>
        <position position="40"/>
    </location>
    <ligand>
        <name>Zn(2+)</name>
        <dbReference type="ChEBI" id="CHEBI:29105"/>
    </ligand>
</feature>
<feature type="binding site" evidence="1">
    <location>
        <position position="43"/>
    </location>
    <ligand>
        <name>Zn(2+)</name>
        <dbReference type="ChEBI" id="CHEBI:29105"/>
    </ligand>
</feature>